<proteinExistence type="inferred from homology"/>
<keyword id="KW-0010">Activator</keyword>
<keyword id="KW-0238">DNA-binding</keyword>
<keyword id="KW-0244">Early protein</keyword>
<keyword id="KW-1185">Reference proteome</keyword>
<keyword id="KW-0804">Transcription</keyword>
<keyword id="KW-0805">Transcription regulation</keyword>
<comment type="function">
    <text evidence="1">Transcription activation.</text>
</comment>
<comment type="similarity">
    <text evidence="3">Belongs to the herpesviridae TAF50 family.</text>
</comment>
<evidence type="ECO:0000250" key="1"/>
<evidence type="ECO:0000256" key="2">
    <source>
        <dbReference type="SAM" id="MobiDB-lite"/>
    </source>
</evidence>
<evidence type="ECO:0000305" key="3"/>
<accession>O36398</accession>
<organismHost>
    <name type="scientific">Connochaetes taurinus</name>
    <name type="common">Blue wildebeest</name>
    <dbReference type="NCBI Taxonomy" id="9927"/>
</organismHost>
<sequence>MSANNPSCASRDPPPKKVRTFFSSIRRLSRPICIDDFIDITADLGDTIGAALKSFQQNNACTQEQSEQFTREVYDVCKNILQENKFRNEMFGFVADMNLLNLFALFRSYKQRVRTHFGKQLLCATASSQIIRFFLERVIRHTDKWFLLAPCNGLILPQELAKEMYVLLSEARGKALNQGRMFSGGRQNMMNAAKKVLTVYSSLRDDGEISPEVKAYMAYIFPVPDIEQVFQPLFKLEQEIRKGKATLTQSLLFAPRKRCPNKTVFSQYGARQRYVLPEVLLEASEPQSTLAYGCPDISSLLRDSSSTQENTDEESGPCCSKTLSPGVPQPQSEYDPSPTSPPDSDTESCDSQVRPESTDSDTHAEDDDVPEAPQAASQTQPTTTQETQSCCSVYNPATTQTGFYYNQQSSDNFASRIDASATSTSYGYPGPVTNHGFSTSVFSHTVPTTATGQQQLHQNMYGGGQQTTTYGSYVGGYSDANGQSVGASTSYYTSKPATSRSSTALQWTTLFPPASSSASSSQVSDYFSGFPYFPGSSTVPQAFEPLAPSTPSLLDELLDRDSGLVSQQQAPAPPQNDQGGPPQYVPVAQEQQQSSTDPLSDEMRRIFEFFDSVNPVTRP</sequence>
<reference key="1">
    <citation type="journal article" date="1997" name="J. Virol.">
        <title>Primary structure of the alcelaphine herpesvirus 1 genome.</title>
        <authorList>
            <person name="Ensser A."/>
            <person name="Pflanz R."/>
            <person name="Fleckenstein B."/>
        </authorList>
    </citation>
    <scope>NUCLEOTIDE SEQUENCE [LARGE SCALE GENOMIC DNA]</scope>
</reference>
<gene>
    <name type="primary">50</name>
</gene>
<dbReference type="EMBL" id="AF005370">
    <property type="protein sequence ID" value="AAC58095.1"/>
    <property type="molecule type" value="Genomic_DNA"/>
</dbReference>
<dbReference type="PIR" id="T03143">
    <property type="entry name" value="T03143"/>
</dbReference>
<dbReference type="RefSeq" id="NP_065547.1">
    <property type="nucleotide sequence ID" value="NC_002531.1"/>
</dbReference>
<dbReference type="KEGG" id="vg:911765"/>
<dbReference type="Proteomes" id="UP000000941">
    <property type="component" value="Segment"/>
</dbReference>
<dbReference type="GO" id="GO:0003677">
    <property type="term" value="F:DNA binding"/>
    <property type="evidence" value="ECO:0007669"/>
    <property type="project" value="UniProtKB-KW"/>
</dbReference>
<dbReference type="GO" id="GO:0006355">
    <property type="term" value="P:regulation of DNA-templated transcription"/>
    <property type="evidence" value="ECO:0007669"/>
    <property type="project" value="InterPro"/>
</dbReference>
<dbReference type="InterPro" id="IPR004998">
    <property type="entry name" value="Herpes_TAF50"/>
</dbReference>
<dbReference type="Pfam" id="PF03326">
    <property type="entry name" value="Herpes_TAF50"/>
    <property type="match status" value="1"/>
</dbReference>
<feature type="chain" id="PRO_0000405751" description="Putative transcription activator BRLF1 homolog">
    <location>
        <begin position="1"/>
        <end position="619"/>
    </location>
</feature>
<feature type="region of interest" description="Disordered" evidence="2">
    <location>
        <begin position="301"/>
        <end position="389"/>
    </location>
</feature>
<feature type="region of interest" description="Disordered" evidence="2">
    <location>
        <begin position="563"/>
        <end position="603"/>
    </location>
</feature>
<feature type="compositionally biased region" description="Low complexity" evidence="2">
    <location>
        <begin position="371"/>
        <end position="389"/>
    </location>
</feature>
<feature type="compositionally biased region" description="Low complexity" evidence="2">
    <location>
        <begin position="567"/>
        <end position="582"/>
    </location>
</feature>
<feature type="compositionally biased region" description="Polar residues" evidence="2">
    <location>
        <begin position="589"/>
        <end position="598"/>
    </location>
</feature>
<name>BRLF1_ALHV1</name>
<organism>
    <name type="scientific">Alcelaphine herpesvirus 1 (strain C500)</name>
    <name type="common">AlHV-1</name>
    <name type="synonym">Malignant catarrhal fever virus</name>
    <dbReference type="NCBI Taxonomy" id="654901"/>
    <lineage>
        <taxon>Viruses</taxon>
        <taxon>Duplodnaviria</taxon>
        <taxon>Heunggongvirae</taxon>
        <taxon>Peploviricota</taxon>
        <taxon>Herviviricetes</taxon>
        <taxon>Herpesvirales</taxon>
        <taxon>Orthoherpesviridae</taxon>
        <taxon>Gammaherpesvirinae</taxon>
        <taxon>Macavirus</taxon>
        <taxon>Macavirus alcelaphinegamma1</taxon>
    </lineage>
</organism>
<protein>
    <recommendedName>
        <fullName>Putative transcription activator BRLF1 homolog</fullName>
    </recommendedName>
</protein>